<gene>
    <name type="ORF">IIV3-113L</name>
</gene>
<protein>
    <recommendedName>
        <fullName>Uncharacterized protein 113L</fullName>
    </recommendedName>
</protein>
<organismHost>
    <name type="scientific">Aedes vexans</name>
    <name type="common">Inland floodwater mosquito</name>
    <name type="synonym">Culex vexans</name>
    <dbReference type="NCBI Taxonomy" id="7163"/>
</organismHost>
<organismHost>
    <name type="scientific">Culex territans</name>
    <dbReference type="NCBI Taxonomy" id="42431"/>
</organismHost>
<organismHost>
    <name type="scientific">Culiseta annulata</name>
    <dbReference type="NCBI Taxonomy" id="332058"/>
</organismHost>
<organismHost>
    <name type="scientific">Ochlerotatus sollicitans</name>
    <name type="common">eastern saltmarsh mosquito</name>
    <dbReference type="NCBI Taxonomy" id="310513"/>
</organismHost>
<organismHost>
    <name type="scientific">Ochlerotatus taeniorhynchus</name>
    <name type="common">Black salt marsh mosquito</name>
    <name type="synonym">Aedes taeniorhynchus</name>
    <dbReference type="NCBI Taxonomy" id="329105"/>
</organismHost>
<organismHost>
    <name type="scientific">Psorophora ferox</name>
    <dbReference type="NCBI Taxonomy" id="7183"/>
</organismHost>
<keyword id="KW-1185">Reference proteome</keyword>
<name>VF155_IIV3</name>
<dbReference type="EMBL" id="DQ643392">
    <property type="protein sequence ID" value="ABF82143.1"/>
    <property type="molecule type" value="Genomic_DNA"/>
</dbReference>
<dbReference type="RefSeq" id="YP_654685.1">
    <property type="nucleotide sequence ID" value="NC_008187.1"/>
</dbReference>
<dbReference type="SMR" id="Q196U7"/>
<dbReference type="KEGG" id="vg:4156324"/>
<dbReference type="OrthoDB" id="1678at10239"/>
<dbReference type="Proteomes" id="UP000001358">
    <property type="component" value="Genome"/>
</dbReference>
<dbReference type="Gene3D" id="1.10.357.40">
    <property type="entry name" value="YbiA-like"/>
    <property type="match status" value="1"/>
</dbReference>
<dbReference type="InterPro" id="IPR037238">
    <property type="entry name" value="YbiA-like_sf"/>
</dbReference>
<dbReference type="SUPFAM" id="SSF143990">
    <property type="entry name" value="YbiA-like"/>
    <property type="match status" value="1"/>
</dbReference>
<accession>Q196U7</accession>
<reference key="1">
    <citation type="journal article" date="2006" name="J. Virol.">
        <title>Genome of invertebrate iridescent virus type 3 (mosquito iridescent virus).</title>
        <authorList>
            <person name="Delhon G."/>
            <person name="Tulman E.R."/>
            <person name="Afonso C.L."/>
            <person name="Lu Z."/>
            <person name="Becnel J.J."/>
            <person name="Moser B.A."/>
            <person name="Kutish G.F."/>
            <person name="Rock D.L."/>
        </authorList>
    </citation>
    <scope>NUCLEOTIDE SEQUENCE [LARGE SCALE GENOMIC DNA]</scope>
</reference>
<sequence>MTQVIVRNSLDKPFGKLANDAEVPLAVKTEDYSSVINYVYSNLLPFGTFREELMATPPSRVLSTFIQMRKHIKKSIIQSSAHTAIMVESERDPVFRQALLETSPQKIVYKSNNKFMGVGEDGTGDNIYGAALEQVRNELQAEKDRDAHQEAVYLAYIAEVNLKKALRKHNLEKYISKDRKRSIKRLVDALVQDYGKTQVFDNSPDIDTIMTLHEKRNIMVYTDPNALIRIVRKNTIRAVLAKNLLELRVAALNAFVDYAISKNVVRSEDKSRLKDQLFDIELGKRNDFSKRILDLFEAKALPDEIKNVIKKFKAQWYFPRDDEIEHFERETVKIPVPQATTTQQATAEPAETYTVSYDSDSVLSPLRRTQALNLNMLLFPTISHFIAFEVNKKYELTSIRGLYDTIKKIPIRTLDAWSKTHEQQTMEQRKLLLLEEAITHKLMDYSVKHLVWAIRDLKFEDKYNPDETTQIYRKYMDKINLRIQKIPSFEEFVEKDPMVHEVVREKVDFYFTILDNLMVHTKYKFNFKVSYDDLVKMSPFHGFILMDSVQISRLPIPDYLQWKNSRYGLSTESLVQIWTIVYNGLKQSEKLVGINDWDIRYKSCFIWAKYLLGQEIRSRRLNVMESRREDEVLLAILSVLFKLKEVNLRFGLSALNFQDLQTALYLCLGRVRQYVPKGNKPDLRPPPTLVADSMFDQPDIQLAPLVEPEEEVDETQVEIYEPEQMDDQEYNEYDYYRDYDEEFEGFNLNARKKFGIFFHEFYAPLENKIQLPELEDAINSFIKSSVPRSVKNQNLNFFITNFRVPDI</sequence>
<evidence type="ECO:0000305" key="1"/>
<proteinExistence type="inferred from homology"/>
<comment type="similarity">
    <text evidence="1">Belongs to the IIV-6 155L family.</text>
</comment>
<organism>
    <name type="scientific">Invertebrate iridescent virus 3</name>
    <name type="common">IIV-3</name>
    <name type="synonym">Mosquito iridescent virus</name>
    <dbReference type="NCBI Taxonomy" id="345201"/>
    <lineage>
        <taxon>Viruses</taxon>
        <taxon>Varidnaviria</taxon>
        <taxon>Bamfordvirae</taxon>
        <taxon>Nucleocytoviricota</taxon>
        <taxon>Megaviricetes</taxon>
        <taxon>Pimascovirales</taxon>
        <taxon>Iridoviridae</taxon>
        <taxon>Betairidovirinae</taxon>
        <taxon>Chloriridovirus</taxon>
    </lineage>
</organism>
<feature type="chain" id="PRO_0000377929" description="Uncharacterized protein 113L">
    <location>
        <begin position="1"/>
        <end position="807"/>
    </location>
</feature>